<proteinExistence type="evidence at transcript level"/>
<reference key="1">
    <citation type="submission" date="2003-09" db="EMBL/GenBank/DDBJ databases">
        <title>Liver regeneration after PH.</title>
        <authorList>
            <person name="Xu C.S."/>
            <person name="Chang C.F."/>
            <person name="Han H.P."/>
            <person name="Wang G.P."/>
            <person name="Chai L.Q."/>
            <person name="Yuan J.Y."/>
            <person name="Yang K.J."/>
            <person name="Zhao L.F."/>
            <person name="Ma H."/>
            <person name="Wang L."/>
            <person name="Wang S.F."/>
            <person name="Xing X.K."/>
            <person name="Shen G.M."/>
            <person name="Shi J.B."/>
            <person name="Rahman S."/>
            <person name="Wang Q.N."/>
            <person name="Zhang J.B."/>
        </authorList>
    </citation>
    <scope>NUCLEOTIDE SEQUENCE [LARGE SCALE MRNA] (ISOFORM 2)</scope>
    <source>
        <strain>Sprague-Dawley</strain>
        <tissue>Liver</tissue>
    </source>
</reference>
<reference key="2">
    <citation type="journal article" date="2004" name="Nature">
        <title>Genome sequence of the Brown Norway rat yields insights into mammalian evolution.</title>
        <authorList>
            <person name="Gibbs R.A."/>
            <person name="Weinstock G.M."/>
            <person name="Metzker M.L."/>
            <person name="Muzny D.M."/>
            <person name="Sodergren E.J."/>
            <person name="Scherer S."/>
            <person name="Scott G."/>
            <person name="Steffen D."/>
            <person name="Worley K.C."/>
            <person name="Burch P.E."/>
            <person name="Okwuonu G."/>
            <person name="Hines S."/>
            <person name="Lewis L."/>
            <person name="Deramo C."/>
            <person name="Delgado O."/>
            <person name="Dugan-Rocha S."/>
            <person name="Miner G."/>
            <person name="Morgan M."/>
            <person name="Hawes A."/>
            <person name="Gill R."/>
            <person name="Holt R.A."/>
            <person name="Adams M.D."/>
            <person name="Amanatides P.G."/>
            <person name="Baden-Tillson H."/>
            <person name="Barnstead M."/>
            <person name="Chin S."/>
            <person name="Evans C.A."/>
            <person name="Ferriera S."/>
            <person name="Fosler C."/>
            <person name="Glodek A."/>
            <person name="Gu Z."/>
            <person name="Jennings D."/>
            <person name="Kraft C.L."/>
            <person name="Nguyen T."/>
            <person name="Pfannkoch C.M."/>
            <person name="Sitter C."/>
            <person name="Sutton G.G."/>
            <person name="Venter J.C."/>
            <person name="Woodage T."/>
            <person name="Smith D."/>
            <person name="Lee H.-M."/>
            <person name="Gustafson E."/>
            <person name="Cahill P."/>
            <person name="Kana A."/>
            <person name="Doucette-Stamm L."/>
            <person name="Weinstock K."/>
            <person name="Fechtel K."/>
            <person name="Weiss R.B."/>
            <person name="Dunn D.M."/>
            <person name="Green E.D."/>
            <person name="Blakesley R.W."/>
            <person name="Bouffard G.G."/>
            <person name="De Jong P.J."/>
            <person name="Osoegawa K."/>
            <person name="Zhu B."/>
            <person name="Marra M."/>
            <person name="Schein J."/>
            <person name="Bosdet I."/>
            <person name="Fjell C."/>
            <person name="Jones S."/>
            <person name="Krzywinski M."/>
            <person name="Mathewson C."/>
            <person name="Siddiqui A."/>
            <person name="Wye N."/>
            <person name="McPherson J."/>
            <person name="Zhao S."/>
            <person name="Fraser C.M."/>
            <person name="Shetty J."/>
            <person name="Shatsman S."/>
            <person name="Geer K."/>
            <person name="Chen Y."/>
            <person name="Abramzon S."/>
            <person name="Nierman W.C."/>
            <person name="Havlak P.H."/>
            <person name="Chen R."/>
            <person name="Durbin K.J."/>
            <person name="Egan A."/>
            <person name="Ren Y."/>
            <person name="Song X.-Z."/>
            <person name="Li B."/>
            <person name="Liu Y."/>
            <person name="Qin X."/>
            <person name="Cawley S."/>
            <person name="Cooney A.J."/>
            <person name="D'Souza L.M."/>
            <person name="Martin K."/>
            <person name="Wu J.Q."/>
            <person name="Gonzalez-Garay M.L."/>
            <person name="Jackson A.R."/>
            <person name="Kalafus K.J."/>
            <person name="McLeod M.P."/>
            <person name="Milosavljevic A."/>
            <person name="Virk D."/>
            <person name="Volkov A."/>
            <person name="Wheeler D.A."/>
            <person name="Zhang Z."/>
            <person name="Bailey J.A."/>
            <person name="Eichler E.E."/>
            <person name="Tuzun E."/>
            <person name="Birney E."/>
            <person name="Mongin E."/>
            <person name="Ureta-Vidal A."/>
            <person name="Woodwark C."/>
            <person name="Zdobnov E."/>
            <person name="Bork P."/>
            <person name="Suyama M."/>
            <person name="Torrents D."/>
            <person name="Alexandersson M."/>
            <person name="Trask B.J."/>
            <person name="Young J.M."/>
            <person name="Huang H."/>
            <person name="Wang H."/>
            <person name="Xing H."/>
            <person name="Daniels S."/>
            <person name="Gietzen D."/>
            <person name="Schmidt J."/>
            <person name="Stevens K."/>
            <person name="Vitt U."/>
            <person name="Wingrove J."/>
            <person name="Camara F."/>
            <person name="Mar Alba M."/>
            <person name="Abril J.F."/>
            <person name="Guigo R."/>
            <person name="Smit A."/>
            <person name="Dubchak I."/>
            <person name="Rubin E.M."/>
            <person name="Couronne O."/>
            <person name="Poliakov A."/>
            <person name="Huebner N."/>
            <person name="Ganten D."/>
            <person name="Goesele C."/>
            <person name="Hummel O."/>
            <person name="Kreitler T."/>
            <person name="Lee Y.-A."/>
            <person name="Monti J."/>
            <person name="Schulz H."/>
            <person name="Zimdahl H."/>
            <person name="Himmelbauer H."/>
            <person name="Lehrach H."/>
            <person name="Jacob H.J."/>
            <person name="Bromberg S."/>
            <person name="Gullings-Handley J."/>
            <person name="Jensen-Seaman M.I."/>
            <person name="Kwitek A.E."/>
            <person name="Lazar J."/>
            <person name="Pasko D."/>
            <person name="Tonellato P.J."/>
            <person name="Twigger S."/>
            <person name="Ponting C.P."/>
            <person name="Duarte J.M."/>
            <person name="Rice S."/>
            <person name="Goodstadt L."/>
            <person name="Beatson S.A."/>
            <person name="Emes R.D."/>
            <person name="Winter E.E."/>
            <person name="Webber C."/>
            <person name="Brandt P."/>
            <person name="Nyakatura G."/>
            <person name="Adetobi M."/>
            <person name="Chiaromonte F."/>
            <person name="Elnitski L."/>
            <person name="Eswara P."/>
            <person name="Hardison R.C."/>
            <person name="Hou M."/>
            <person name="Kolbe D."/>
            <person name="Makova K."/>
            <person name="Miller W."/>
            <person name="Nekrutenko A."/>
            <person name="Riemer C."/>
            <person name="Schwartz S."/>
            <person name="Taylor J."/>
            <person name="Yang S."/>
            <person name="Zhang Y."/>
            <person name="Lindpaintner K."/>
            <person name="Andrews T.D."/>
            <person name="Caccamo M."/>
            <person name="Clamp M."/>
            <person name="Clarke L."/>
            <person name="Curwen V."/>
            <person name="Durbin R.M."/>
            <person name="Eyras E."/>
            <person name="Searle S.M."/>
            <person name="Cooper G.M."/>
            <person name="Batzoglou S."/>
            <person name="Brudno M."/>
            <person name="Sidow A."/>
            <person name="Stone E.A."/>
            <person name="Payseur B.A."/>
            <person name="Bourque G."/>
            <person name="Lopez-Otin C."/>
            <person name="Puente X.S."/>
            <person name="Chakrabarti K."/>
            <person name="Chatterji S."/>
            <person name="Dewey C."/>
            <person name="Pachter L."/>
            <person name="Bray N."/>
            <person name="Yap V.B."/>
            <person name="Caspi A."/>
            <person name="Tesler G."/>
            <person name="Pevzner P.A."/>
            <person name="Haussler D."/>
            <person name="Roskin K.M."/>
            <person name="Baertsch R."/>
            <person name="Clawson H."/>
            <person name="Furey T.S."/>
            <person name="Hinrichs A.S."/>
            <person name="Karolchik D."/>
            <person name="Kent W.J."/>
            <person name="Rosenbloom K.R."/>
            <person name="Trumbower H."/>
            <person name="Weirauch M."/>
            <person name="Cooper D.N."/>
            <person name="Stenson P.D."/>
            <person name="Ma B."/>
            <person name="Brent M."/>
            <person name="Arumugam M."/>
            <person name="Shteynberg D."/>
            <person name="Copley R.R."/>
            <person name="Taylor M.S."/>
            <person name="Riethman H."/>
            <person name="Mudunuri U."/>
            <person name="Peterson J."/>
            <person name="Guyer M."/>
            <person name="Felsenfeld A."/>
            <person name="Old S."/>
            <person name="Mockrin S."/>
            <person name="Collins F.S."/>
        </authorList>
    </citation>
    <scope>NUCLEOTIDE SEQUENCE [LARGE SCALE GENOMIC DNA]</scope>
    <source>
        <strain>Brown Norway</strain>
    </source>
</reference>
<feature type="transit peptide" description="Mitochondrion" evidence="4">
    <location>
        <begin position="1"/>
        <end position="30"/>
    </location>
</feature>
<feature type="chain" id="PRO_0000042712" description="Succinate dehydrogenase assembly factor 3, mitochondrial">
    <location>
        <begin position="31"/>
        <end position="125"/>
    </location>
</feature>
<feature type="splice variant" id="VSP_016050" description="In isoform 2." evidence="5">
    <original>MTGRHVSRVRSLYRRILQLHRALPPDLKALGDQYVKDEFRRHKTVGPGEAQRFLKEWE</original>
    <variation>MARSGWQKFDCVVVTARGSDTSTLAKDADENRPPSFGSFGGNEI</variation>
    <location>
        <begin position="1"/>
        <end position="58"/>
    </location>
</feature>
<organism>
    <name type="scientific">Rattus norvegicus</name>
    <name type="common">Rat</name>
    <dbReference type="NCBI Taxonomy" id="10116"/>
    <lineage>
        <taxon>Eukaryota</taxon>
        <taxon>Metazoa</taxon>
        <taxon>Chordata</taxon>
        <taxon>Craniata</taxon>
        <taxon>Vertebrata</taxon>
        <taxon>Euteleostomi</taxon>
        <taxon>Mammalia</taxon>
        <taxon>Eutheria</taxon>
        <taxon>Euarchontoglires</taxon>
        <taxon>Glires</taxon>
        <taxon>Rodentia</taxon>
        <taxon>Myomorpha</taxon>
        <taxon>Muroidea</taxon>
        <taxon>Muridae</taxon>
        <taxon>Murinae</taxon>
        <taxon>Rattus</taxon>
    </lineage>
</organism>
<gene>
    <name evidence="3" type="primary">Sdhaf3</name>
    <name evidence="3" type="synonym">Acn9</name>
</gene>
<dbReference type="EMBL" id="AY387078">
    <property type="protein sequence ID" value="AAQ91048.1"/>
    <property type="molecule type" value="mRNA"/>
</dbReference>
<dbReference type="EMBL" id="AABR03035336">
    <property type="status" value="NOT_ANNOTATED_CDS"/>
    <property type="molecule type" value="Genomic_DNA"/>
</dbReference>
<dbReference type="EMBL" id="AABR03033448">
    <property type="status" value="NOT_ANNOTATED_CDS"/>
    <property type="molecule type" value="Genomic_DNA"/>
</dbReference>
<dbReference type="RefSeq" id="NP_001041379.1">
    <property type="nucleotide sequence ID" value="NM_001047914.1"/>
</dbReference>
<dbReference type="RefSeq" id="NP_001399494.1">
    <molecule id="Q6TUF2-1"/>
    <property type="nucleotide sequence ID" value="NM_001412565.1"/>
</dbReference>
<dbReference type="SMR" id="Q6TUF2"/>
<dbReference type="FunCoup" id="Q6TUF2">
    <property type="interactions" value="1783"/>
</dbReference>
<dbReference type="STRING" id="10116.ENSRNOP00000015286"/>
<dbReference type="PhosphoSitePlus" id="Q6TUF2"/>
<dbReference type="PaxDb" id="10116-ENSRNOP00000015286"/>
<dbReference type="Ensembl" id="ENSRNOT00000015286.8">
    <molecule id="Q6TUF2-1"/>
    <property type="protein sequence ID" value="ENSRNOP00000015286.5"/>
    <property type="gene ID" value="ENSRNOG00000011283.8"/>
</dbReference>
<dbReference type="GeneID" id="362323"/>
<dbReference type="UCSC" id="RGD:1305143">
    <molecule id="Q6TUF2-1"/>
    <property type="organism name" value="rat"/>
</dbReference>
<dbReference type="AGR" id="RGD:1305143"/>
<dbReference type="RGD" id="1305143">
    <property type="gene designation" value="Sdhaf3"/>
</dbReference>
<dbReference type="eggNOG" id="KOG4100">
    <property type="taxonomic scope" value="Eukaryota"/>
</dbReference>
<dbReference type="GeneTree" id="ENSGT00390000010029"/>
<dbReference type="HOGENOM" id="CLU_102310_2_1_1"/>
<dbReference type="InParanoid" id="Q6TUF2"/>
<dbReference type="OMA" id="WQQTNEN"/>
<dbReference type="OrthoDB" id="278329at2759"/>
<dbReference type="PhylomeDB" id="Q6TUF2"/>
<dbReference type="TreeFam" id="TF105635"/>
<dbReference type="PRO" id="PR:Q6TUF2"/>
<dbReference type="Proteomes" id="UP000002494">
    <property type="component" value="Chromosome 4"/>
</dbReference>
<dbReference type="Bgee" id="ENSRNOG00000011283">
    <property type="expression patterns" value="Expressed in quadriceps femoris and 20 other cell types or tissues"/>
</dbReference>
<dbReference type="GO" id="GO:0005758">
    <property type="term" value="C:mitochondrial intermembrane space"/>
    <property type="evidence" value="ECO:0000250"/>
    <property type="project" value="HGNC-UCL"/>
</dbReference>
<dbReference type="GO" id="GO:0005759">
    <property type="term" value="C:mitochondrial matrix"/>
    <property type="evidence" value="ECO:0007669"/>
    <property type="project" value="UniProtKB-SubCell"/>
</dbReference>
<dbReference type="GO" id="GO:0034553">
    <property type="term" value="P:mitochondrial respiratory chain complex II assembly"/>
    <property type="evidence" value="ECO:0000318"/>
    <property type="project" value="GO_Central"/>
</dbReference>
<dbReference type="GO" id="GO:0006105">
    <property type="term" value="P:succinate metabolic process"/>
    <property type="evidence" value="ECO:0000318"/>
    <property type="project" value="GO_Central"/>
</dbReference>
<dbReference type="CDD" id="cd20270">
    <property type="entry name" value="Complex1_LYR_SDHAF3_LYRM10"/>
    <property type="match status" value="1"/>
</dbReference>
<dbReference type="InterPro" id="IPR008381">
    <property type="entry name" value="SDHAF3/Sdh7"/>
</dbReference>
<dbReference type="PANTHER" id="PTHR13137">
    <property type="entry name" value="DC11 ACN9 HOMOLOG"/>
    <property type="match status" value="1"/>
</dbReference>
<dbReference type="PANTHER" id="PTHR13137:SF6">
    <property type="entry name" value="SUCCINATE DEHYDROGENASE ASSEMBLY FACTOR 3, MITOCHONDRIAL"/>
    <property type="match status" value="1"/>
</dbReference>
<dbReference type="Pfam" id="PF13233">
    <property type="entry name" value="Complex1_LYR_2"/>
    <property type="match status" value="1"/>
</dbReference>
<keyword id="KW-0025">Alternative splicing</keyword>
<keyword id="KW-0143">Chaperone</keyword>
<keyword id="KW-0496">Mitochondrion</keyword>
<keyword id="KW-1185">Reference proteome</keyword>
<keyword id="KW-0809">Transit peptide</keyword>
<sequence>MTGRHVSRVRSLYRRILQLHRALPPDLKALGDQYVKDEFRRHKTVGPGEAQRFLKEWETYAAVLWQQAKDSRQSSSGKACFGTSLPEEKLNDFRDEQIGQLQELMQEATKPNRQFSITESTKPHL</sequence>
<protein>
    <recommendedName>
        <fullName evidence="1">Succinate dehydrogenase assembly factor 3, mitochondrial</fullName>
        <shortName evidence="1">SDH assembly factor 3</shortName>
        <shortName evidence="1">SDHAF3</shortName>
    </recommendedName>
    <alternativeName>
        <fullName>Liver regeneration-related protein LRRGT00092</fullName>
    </alternativeName>
</protein>
<evidence type="ECO:0000250" key="1">
    <source>
        <dbReference type="UniProtKB" id="Q04401"/>
    </source>
</evidence>
<evidence type="ECO:0000250" key="2">
    <source>
        <dbReference type="UniProtKB" id="Q8SZ16"/>
    </source>
</evidence>
<evidence type="ECO:0000250" key="3">
    <source>
        <dbReference type="UniProtKB" id="Q9NRP4"/>
    </source>
</evidence>
<evidence type="ECO:0000255" key="4"/>
<evidence type="ECO:0000303" key="5">
    <source ref="1"/>
</evidence>
<evidence type="ECO:0000305" key="6"/>
<name>SDHF3_RAT</name>
<comment type="function">
    <text evidence="1 2">Plays an essential role in the assembly of succinate dehydrogenase (SDH), an enzyme complex (also referred to as respiratory complex II) that is a component of both the tricarboxylic acid (TCA) cycle and the mitochondrial electron transport chain, and which couples the oxidation of succinate to fumarate with the reduction of ubiquinone (coenzyme Q) to ubiquinol. Promotes maturation of the iron-sulfur protein subunit Sdhb of the SDH catalytic dimer, protecting it from the deleterious effects of oxidants. May act together with SDHAF1.</text>
</comment>
<comment type="subunit">
    <text evidence="1">Interacts with Sdhb within an Sdha-Sdhb subcomplex.</text>
</comment>
<comment type="subcellular location">
    <subcellularLocation>
        <location evidence="1">Mitochondrion matrix</location>
    </subcellularLocation>
</comment>
<comment type="alternative products">
    <event type="alternative splicing"/>
    <isoform>
        <id>Q6TUF2-1</id>
        <name>1</name>
        <sequence type="displayed"/>
    </isoform>
    <isoform>
        <id>Q6TUF2-2</id>
        <name>2</name>
        <sequence type="described" ref="VSP_016050"/>
    </isoform>
</comment>
<comment type="similarity">
    <text evidence="6">Belongs to the complex I LYR family. SDHAF3 subfamily.</text>
</comment>
<accession>Q6TUF2</accession>